<proteinExistence type="evidence at protein level"/>
<gene>
    <name evidence="6" type="primary">vip15</name>
    <name evidence="8" type="ordered locus">Caka_1180</name>
</gene>
<keyword id="KW-0004">4Fe-4S</keyword>
<keyword id="KW-0051">Antiviral defense</keyword>
<keyword id="KW-0408">Iron</keyword>
<keyword id="KW-0411">Iron-sulfur</keyword>
<keyword id="KW-0456">Lyase</keyword>
<keyword id="KW-0479">Metal-binding</keyword>
<keyword id="KW-1185">Reference proteome</keyword>
<keyword id="KW-0949">S-adenosyl-L-methionine</keyword>
<sequence length="310" mass="34726">MKPAIPPTINLHTIRACNYGCKYCFAGFQDCDTGVMPQADLHEILRQFAATTGMAIHPAKVNFAGGEPMLSPTFVEDICYAKSLGLTTSLVTNGSLLSERLLDKLSGQLDLLTISIDSLKPGTNRAIGRTNRQNPLTVSEYLDRILKARTRGITVKLNTVVNRLNLDEDMTDFIREAQPIRWKLFKVLKIQNENSAHFDSWAIRDEEFVHFVERHRKVESSGVTLVPESNEQMYGTYGIISPDGRFIDNSQGTHRYSPRIVDVGITQAFADVNFSMAGFQQRGGIYSIKRSTTNRSLQTSALHPKRELTK</sequence>
<comment type="function">
    <text evidence="1 3">Expression of pVip15 in E.coli (strain MG1655) confers resistance to phage T7; prevents culture collapse upon infection. Catalyzes the conversion of guanosine triphosphate (GTP) to 3'-deoxy-3',4'-didehydro-GTP (ddhGTP), probably via a SAM-dependent radical mechanism (PubMed:32937646). The modified nucleotide represses transcription from T7 RNA polymerase-directed genes (possibly by acting as chain terminators), strongly suggesting these nucleotides block viral polymerase transcription (By similarity).</text>
</comment>
<comment type="catalytic activity">
    <reaction evidence="7">
        <text>GTP + AH2 + S-adenosyl-L-methionine = 3'-deoxy-3',4'-didehydro-GTP + 5'-deoxyadenosine + L-methionine + A + H2O + H(+)</text>
        <dbReference type="Rhea" id="RHEA:72143"/>
        <dbReference type="ChEBI" id="CHEBI:13193"/>
        <dbReference type="ChEBI" id="CHEBI:15377"/>
        <dbReference type="ChEBI" id="CHEBI:15378"/>
        <dbReference type="ChEBI" id="CHEBI:17319"/>
        <dbReference type="ChEBI" id="CHEBI:17499"/>
        <dbReference type="ChEBI" id="CHEBI:37565"/>
        <dbReference type="ChEBI" id="CHEBI:57844"/>
        <dbReference type="ChEBI" id="CHEBI:59789"/>
        <dbReference type="ChEBI" id="CHEBI:191857"/>
    </reaction>
    <physiologicalReaction direction="left-to-right" evidence="7">
        <dbReference type="Rhea" id="RHEA:72144"/>
    </physiologicalReaction>
</comment>
<comment type="cofactor">
    <cofactor evidence="2">
        <name>[4Fe-4S] cluster</name>
        <dbReference type="ChEBI" id="CHEBI:49883"/>
    </cofactor>
</comment>
<comment type="similarity">
    <text evidence="7">Belongs to the radical SAM superfamily. Viperin family.</text>
</comment>
<evidence type="ECO:0000250" key="1">
    <source>
        <dbReference type="UniProtKB" id="P0DW53"/>
    </source>
</evidence>
<evidence type="ECO:0000255" key="2">
    <source>
        <dbReference type="PROSITE-ProRule" id="PRU01266"/>
    </source>
</evidence>
<evidence type="ECO:0000269" key="3">
    <source>
    </source>
</evidence>
<evidence type="ECO:0000303" key="4">
    <source>
    </source>
</evidence>
<evidence type="ECO:0000303" key="5">
    <source>
    </source>
</evidence>
<evidence type="ECO:0000305" key="6"/>
<evidence type="ECO:0000305" key="7">
    <source>
    </source>
</evidence>
<evidence type="ECO:0000312" key="8">
    <source>
        <dbReference type="EMBL" id="ADE54200.1"/>
    </source>
</evidence>
<protein>
    <recommendedName>
        <fullName evidence="5">S-adenosylmethionine-dependent nucleotide dehydratase</fullName>
        <shortName evidence="5">SAND</shortName>
        <ecNumber evidence="7">4.2.-.-</ecNumber>
    </recommendedName>
    <alternativeName>
        <fullName evidence="4">Prokaryotic viperin protein pVip15</fullName>
        <shortName evidence="4">pVip15</shortName>
    </alternativeName>
</protein>
<accession>D5EID4</accession>
<organism>
    <name type="scientific">Coraliomargarita akajimensis (strain DSM 45221 / IAM 15411 / JCM 23193 / KCTC 12865 / 04OKA010-24)</name>
    <dbReference type="NCBI Taxonomy" id="583355"/>
    <lineage>
        <taxon>Bacteria</taxon>
        <taxon>Pseudomonadati</taxon>
        <taxon>Verrucomicrobiota</taxon>
        <taxon>Opitutia</taxon>
        <taxon>Puniceicoccales</taxon>
        <taxon>Coraliomargaritaceae</taxon>
        <taxon>Coraliomargarita</taxon>
    </lineage>
</organism>
<reference evidence="8" key="1">
    <citation type="journal article" date="2010" name="Stand. Genomic Sci.">
        <title>Complete genome sequence of Coraliomargarita akajimensis type strain (04OKA010-24).</title>
        <authorList>
            <person name="Mavromatis K."/>
            <person name="Abt B."/>
            <person name="Brambilla E."/>
            <person name="Lapidus A."/>
            <person name="Copeland A."/>
            <person name="Deshpande S."/>
            <person name="Nolan M."/>
            <person name="Lucas S."/>
            <person name="Tice H."/>
            <person name="Cheng J.F."/>
            <person name="Han C."/>
            <person name="Detter J.C."/>
            <person name="Woyke T."/>
            <person name="Goodwin L."/>
            <person name="Pitluck S."/>
            <person name="Held B."/>
            <person name="Brettin T."/>
            <person name="Tapia R."/>
            <person name="Ivanova N."/>
            <person name="Mikhailova N."/>
            <person name="Pati A."/>
            <person name="Liolios K."/>
            <person name="Chen A."/>
            <person name="Palaniappan K."/>
            <person name="Land M."/>
            <person name="Hauser L."/>
            <person name="Chang Y.J."/>
            <person name="Jeffries C.D."/>
            <person name="Rohde M."/>
            <person name="Goker M."/>
            <person name="Bristow J."/>
            <person name="Eisen J.A."/>
            <person name="Markowitz V."/>
            <person name="Hugenholtz P."/>
            <person name="Klenk H.P."/>
            <person name="Kyrpides N.C."/>
        </authorList>
    </citation>
    <scope>NUCLEOTIDE SEQUENCE [LARGE SCALE GENOMIC DNA]</scope>
    <source>
        <strain>DSM 45221 / IAM 15411 / JCM 23193 / KCTC 12865 / 04OKA010-24</strain>
    </source>
</reference>
<reference key="2">
    <citation type="journal article" date="2021" name="Nature">
        <title>Prokaryotic viperins produce diverse antiviral molecules.</title>
        <authorList>
            <person name="Bernheim A."/>
            <person name="Millman A."/>
            <person name="Ofir G."/>
            <person name="Meitav G."/>
            <person name="Avraham C."/>
            <person name="Shomar H."/>
            <person name="Rosenberg M.M."/>
            <person name="Tal N."/>
            <person name="Melamed S."/>
            <person name="Amitai G."/>
            <person name="Sorek R."/>
        </authorList>
    </citation>
    <scope>FUNCTION IN ANTIVIRAL DEFENSE</scope>
    <scope>FUNCTION IN DDHGTP SYNTHESIS</scope>
    <scope>PROBABLE CATALYTIC ACTIVITY</scope>
    <source>
        <strain>DSM 45221 / IAM 15411 / JCM 23193 / KCTC 12865 / 04OKA010-24</strain>
    </source>
</reference>
<reference key="3">
    <citation type="journal article" date="2022" name="Front. Mol. Biosci.">
        <title>Radical-SAM dependent nucleotide dehydratase (SAND), rectification of the names of an ancient iron-sulfur enzyme using NC-IUBMB recommendations.</title>
        <authorList>
            <person name="Ji Y."/>
            <person name="Wei L."/>
            <person name="Da A."/>
            <person name="Stark H."/>
            <person name="Hagedoorn P.-L."/>
            <person name="Ciofi-Baffoni S."/>
            <person name="Cowley S.A."/>
            <person name="Louro R.O."/>
            <person name="Todorovic S."/>
            <person name="Mroginski M.A."/>
            <person name="Nicolet Y."/>
            <person name="Roessler M.M."/>
            <person name="Le Brun N.E."/>
            <person name="Piccioli M."/>
            <person name="James W.S."/>
            <person name="Hagen W.R."/>
            <person name="Ebrahimi K.H."/>
        </authorList>
    </citation>
    <scope>NOMENCLATURE</scope>
</reference>
<feature type="chain" id="PRO_0000456419" description="S-adenosylmethionine-dependent nucleotide dehydratase">
    <location>
        <begin position="1"/>
        <end position="310"/>
    </location>
</feature>
<feature type="domain" description="Radical SAM core" evidence="2">
    <location>
        <begin position="3"/>
        <end position="221"/>
    </location>
</feature>
<feature type="binding site" evidence="2">
    <location>
        <position position="17"/>
    </location>
    <ligand>
        <name>[4Fe-4S] cluster</name>
        <dbReference type="ChEBI" id="CHEBI:49883"/>
        <note>4Fe-4S-S-AdoMet</note>
    </ligand>
</feature>
<feature type="binding site" evidence="2">
    <location>
        <position position="21"/>
    </location>
    <ligand>
        <name>[4Fe-4S] cluster</name>
        <dbReference type="ChEBI" id="CHEBI:49883"/>
        <note>4Fe-4S-S-AdoMet</note>
    </ligand>
</feature>
<feature type="binding site" evidence="2">
    <location>
        <position position="24"/>
    </location>
    <ligand>
        <name>[4Fe-4S] cluster</name>
        <dbReference type="ChEBI" id="CHEBI:49883"/>
        <note>4Fe-4S-S-AdoMet</note>
    </ligand>
</feature>
<dbReference type="EC" id="4.2.-.-" evidence="7"/>
<dbReference type="EMBL" id="CP001998">
    <property type="protein sequence ID" value="ADE54200.1"/>
    <property type="molecule type" value="Genomic_DNA"/>
</dbReference>
<dbReference type="RefSeq" id="WP_013042922.1">
    <property type="nucleotide sequence ID" value="NC_014008.1"/>
</dbReference>
<dbReference type="SMR" id="D5EID4"/>
<dbReference type="STRING" id="583355.Caka_1180"/>
<dbReference type="KEGG" id="caa:Caka_1180"/>
<dbReference type="eggNOG" id="COG0535">
    <property type="taxonomic scope" value="Bacteria"/>
</dbReference>
<dbReference type="HOGENOM" id="CLU_049058_0_0_0"/>
<dbReference type="OrthoDB" id="9763993at2"/>
<dbReference type="Proteomes" id="UP000000925">
    <property type="component" value="Chromosome"/>
</dbReference>
<dbReference type="GO" id="GO:0051539">
    <property type="term" value="F:4 iron, 4 sulfur cluster binding"/>
    <property type="evidence" value="ECO:0007669"/>
    <property type="project" value="UniProtKB-KW"/>
</dbReference>
<dbReference type="GO" id="GO:0016829">
    <property type="term" value="F:lyase activity"/>
    <property type="evidence" value="ECO:0007669"/>
    <property type="project" value="UniProtKB-KW"/>
</dbReference>
<dbReference type="GO" id="GO:0046872">
    <property type="term" value="F:metal ion binding"/>
    <property type="evidence" value="ECO:0007669"/>
    <property type="project" value="UniProtKB-KW"/>
</dbReference>
<dbReference type="GO" id="GO:0051607">
    <property type="term" value="P:defense response to virus"/>
    <property type="evidence" value="ECO:0007669"/>
    <property type="project" value="UniProtKB-KW"/>
</dbReference>
<dbReference type="CDD" id="cd01335">
    <property type="entry name" value="Radical_SAM"/>
    <property type="match status" value="1"/>
</dbReference>
<dbReference type="Gene3D" id="3.20.20.70">
    <property type="entry name" value="Aldolase class I"/>
    <property type="match status" value="1"/>
</dbReference>
<dbReference type="InterPro" id="IPR013785">
    <property type="entry name" value="Aldolase_TIM"/>
</dbReference>
<dbReference type="InterPro" id="IPR006638">
    <property type="entry name" value="Elp3/MiaA/NifB-like_rSAM"/>
</dbReference>
<dbReference type="InterPro" id="IPR051196">
    <property type="entry name" value="RSAD2/Viperin_antiviral"/>
</dbReference>
<dbReference type="InterPro" id="IPR007197">
    <property type="entry name" value="rSAM"/>
</dbReference>
<dbReference type="NCBIfam" id="NF038283">
    <property type="entry name" value="viperin_w_prok"/>
    <property type="match status" value="1"/>
</dbReference>
<dbReference type="PANTHER" id="PTHR21339">
    <property type="entry name" value="RADICAL S-ADENOSYL METHIONINE DOMAIN-CONTAINING PROTEIN 2"/>
    <property type="match status" value="1"/>
</dbReference>
<dbReference type="PANTHER" id="PTHR21339:SF0">
    <property type="entry name" value="S-ADENOSYLMETHIONINE-DEPENDENT NUCLEOTIDE DEHYDRATASE RSAD2"/>
    <property type="match status" value="1"/>
</dbReference>
<dbReference type="Pfam" id="PF04055">
    <property type="entry name" value="Radical_SAM"/>
    <property type="match status" value="1"/>
</dbReference>
<dbReference type="SFLD" id="SFLDG01088">
    <property type="entry name" value="antiviral_proteins"/>
    <property type="match status" value="1"/>
</dbReference>
<dbReference type="SFLD" id="SFLDS00029">
    <property type="entry name" value="Radical_SAM"/>
    <property type="match status" value="1"/>
</dbReference>
<dbReference type="SFLD" id="SFLDG01067">
    <property type="entry name" value="SPASM/twitch_domain_containing"/>
    <property type="match status" value="1"/>
</dbReference>
<dbReference type="SMART" id="SM00729">
    <property type="entry name" value="Elp3"/>
    <property type="match status" value="1"/>
</dbReference>
<dbReference type="SUPFAM" id="SSF102114">
    <property type="entry name" value="Radical SAM enzymes"/>
    <property type="match status" value="1"/>
</dbReference>
<dbReference type="PROSITE" id="PS51918">
    <property type="entry name" value="RADICAL_SAM"/>
    <property type="match status" value="1"/>
</dbReference>
<name>SAND_CORAD</name>